<comment type="function">
    <text evidence="2 3 4">Protein-L-histidine N-tele-methyltransferase that specifically monomethylates RPL3, thereby regulating translation elongation (PubMed:23349634, PubMed:33693809, PubMed:35674491). Histidine methylation of RPL3 regulates translation elongation by slowing ribosome traversal on tyrosine codons: slower elongation provides enough time for proper folding of synthesized proteins and prevents cellular aggregation of tyrosine-rich proteins (PubMed:35674491).</text>
</comment>
<comment type="catalytic activity">
    <reaction evidence="3 4">
        <text>L-histidyl-[protein] + S-adenosyl-L-methionine = N(tele)-methyl-L-histidyl-[protein] + S-adenosyl-L-homocysteine + H(+)</text>
        <dbReference type="Rhea" id="RHEA:19369"/>
        <dbReference type="Rhea" id="RHEA-COMP:9745"/>
        <dbReference type="Rhea" id="RHEA-COMP:11600"/>
        <dbReference type="ChEBI" id="CHEBI:15378"/>
        <dbReference type="ChEBI" id="CHEBI:16367"/>
        <dbReference type="ChEBI" id="CHEBI:29979"/>
        <dbReference type="ChEBI" id="CHEBI:57856"/>
        <dbReference type="ChEBI" id="CHEBI:59789"/>
        <dbReference type="EC" id="2.1.1.85"/>
    </reaction>
    <physiologicalReaction direction="left-to-right" evidence="3 4">
        <dbReference type="Rhea" id="RHEA:19370"/>
    </physiologicalReaction>
</comment>
<comment type="subunit">
    <text evidence="2">Interacts with GRWD1 and members of the heat shock protein 90 and 70 families; these proteins may possibly be methylation substrates for the enzyme.</text>
</comment>
<comment type="subcellular location">
    <subcellularLocation>
        <location evidence="3">Cytoplasm</location>
        <location evidence="3">Cytosol</location>
    </subcellularLocation>
    <subcellularLocation>
        <location evidence="3">Nucleus</location>
    </subcellularLocation>
    <subcellularLocation>
        <location evidence="3">Nucleus</location>
        <location evidence="3">Nucleolus</location>
    </subcellularLocation>
</comment>
<comment type="PTM">
    <text evidence="3">Monomethylated at His-154 through automethylation (PubMed:33693809). Automethylation at His-154 positively regulates the methyltransferase activity toward RPL3 (PubMed:33693809). Probably methylated on other residues (PubMed:33693809).</text>
</comment>
<comment type="similarity">
    <text evidence="8">Belongs to the methyltransferase superfamily. METTL18 family.</text>
</comment>
<reference key="1">
    <citation type="submission" date="2004-09" db="EMBL/GenBank/DDBJ databases">
        <title>Cloning and identification of human AsTP2 gene transactivated by arsenic trioxide.</title>
        <authorList>
            <person name="Wu S.-H."/>
            <person name="Cheng J."/>
            <person name="Zheng Y.-J."/>
            <person name="Liu Y."/>
            <person name="Zhang Y.-X."/>
        </authorList>
    </citation>
    <scope>NUCLEOTIDE SEQUENCE [MRNA]</scope>
</reference>
<reference key="2">
    <citation type="submission" date="1999-02" db="EMBL/GenBank/DDBJ databases">
        <authorList>
            <person name="Rhodes S."/>
        </authorList>
    </citation>
    <scope>NUCLEOTIDE SEQUENCE [LARGE SCALE MRNA]</scope>
</reference>
<reference key="3">
    <citation type="submission" date="2004-05" db="EMBL/GenBank/DDBJ databases">
        <title>Cloning of human full open reading frames in Gateway(TM) system entry vector (pDONR201).</title>
        <authorList>
            <person name="Ebert L."/>
            <person name="Schick M."/>
            <person name="Neubert P."/>
            <person name="Schatten R."/>
            <person name="Henze S."/>
            <person name="Korn B."/>
        </authorList>
    </citation>
    <scope>NUCLEOTIDE SEQUENCE [LARGE SCALE MRNA]</scope>
</reference>
<reference key="4">
    <citation type="journal article" date="2004" name="Nat. Genet.">
        <title>Complete sequencing and characterization of 21,243 full-length human cDNAs.</title>
        <authorList>
            <person name="Ota T."/>
            <person name="Suzuki Y."/>
            <person name="Nishikawa T."/>
            <person name="Otsuki T."/>
            <person name="Sugiyama T."/>
            <person name="Irie R."/>
            <person name="Wakamatsu A."/>
            <person name="Hayashi K."/>
            <person name="Sato H."/>
            <person name="Nagai K."/>
            <person name="Kimura K."/>
            <person name="Makita H."/>
            <person name="Sekine M."/>
            <person name="Obayashi M."/>
            <person name="Nishi T."/>
            <person name="Shibahara T."/>
            <person name="Tanaka T."/>
            <person name="Ishii S."/>
            <person name="Yamamoto J."/>
            <person name="Saito K."/>
            <person name="Kawai Y."/>
            <person name="Isono Y."/>
            <person name="Nakamura Y."/>
            <person name="Nagahari K."/>
            <person name="Murakami K."/>
            <person name="Yasuda T."/>
            <person name="Iwayanagi T."/>
            <person name="Wagatsuma M."/>
            <person name="Shiratori A."/>
            <person name="Sudo H."/>
            <person name="Hosoiri T."/>
            <person name="Kaku Y."/>
            <person name="Kodaira H."/>
            <person name="Kondo H."/>
            <person name="Sugawara M."/>
            <person name="Takahashi M."/>
            <person name="Kanda K."/>
            <person name="Yokoi T."/>
            <person name="Furuya T."/>
            <person name="Kikkawa E."/>
            <person name="Omura Y."/>
            <person name="Abe K."/>
            <person name="Kamihara K."/>
            <person name="Katsuta N."/>
            <person name="Sato K."/>
            <person name="Tanikawa M."/>
            <person name="Yamazaki M."/>
            <person name="Ninomiya K."/>
            <person name="Ishibashi T."/>
            <person name="Yamashita H."/>
            <person name="Murakawa K."/>
            <person name="Fujimori K."/>
            <person name="Tanai H."/>
            <person name="Kimata M."/>
            <person name="Watanabe M."/>
            <person name="Hiraoka S."/>
            <person name="Chiba Y."/>
            <person name="Ishida S."/>
            <person name="Ono Y."/>
            <person name="Takiguchi S."/>
            <person name="Watanabe S."/>
            <person name="Yosida M."/>
            <person name="Hotuta T."/>
            <person name="Kusano J."/>
            <person name="Kanehori K."/>
            <person name="Takahashi-Fujii A."/>
            <person name="Hara H."/>
            <person name="Tanase T.-O."/>
            <person name="Nomura Y."/>
            <person name="Togiya S."/>
            <person name="Komai F."/>
            <person name="Hara R."/>
            <person name="Takeuchi K."/>
            <person name="Arita M."/>
            <person name="Imose N."/>
            <person name="Musashino K."/>
            <person name="Yuuki H."/>
            <person name="Oshima A."/>
            <person name="Sasaki N."/>
            <person name="Aotsuka S."/>
            <person name="Yoshikawa Y."/>
            <person name="Matsunawa H."/>
            <person name="Ichihara T."/>
            <person name="Shiohata N."/>
            <person name="Sano S."/>
            <person name="Moriya S."/>
            <person name="Momiyama H."/>
            <person name="Satoh N."/>
            <person name="Takami S."/>
            <person name="Terashima Y."/>
            <person name="Suzuki O."/>
            <person name="Nakagawa S."/>
            <person name="Senoh A."/>
            <person name="Mizoguchi H."/>
            <person name="Goto Y."/>
            <person name="Shimizu F."/>
            <person name="Wakebe H."/>
            <person name="Hishigaki H."/>
            <person name="Watanabe T."/>
            <person name="Sugiyama A."/>
            <person name="Takemoto M."/>
            <person name="Kawakami B."/>
            <person name="Yamazaki M."/>
            <person name="Watanabe K."/>
            <person name="Kumagai A."/>
            <person name="Itakura S."/>
            <person name="Fukuzumi Y."/>
            <person name="Fujimori Y."/>
            <person name="Komiyama M."/>
            <person name="Tashiro H."/>
            <person name="Tanigami A."/>
            <person name="Fujiwara T."/>
            <person name="Ono T."/>
            <person name="Yamada K."/>
            <person name="Fujii Y."/>
            <person name="Ozaki K."/>
            <person name="Hirao M."/>
            <person name="Ohmori Y."/>
            <person name="Kawabata A."/>
            <person name="Hikiji T."/>
            <person name="Kobatake N."/>
            <person name="Inagaki H."/>
            <person name="Ikema Y."/>
            <person name="Okamoto S."/>
            <person name="Okitani R."/>
            <person name="Kawakami T."/>
            <person name="Noguchi S."/>
            <person name="Itoh T."/>
            <person name="Shigeta K."/>
            <person name="Senba T."/>
            <person name="Matsumura K."/>
            <person name="Nakajima Y."/>
            <person name="Mizuno T."/>
            <person name="Morinaga M."/>
            <person name="Sasaki M."/>
            <person name="Togashi T."/>
            <person name="Oyama M."/>
            <person name="Hata H."/>
            <person name="Watanabe M."/>
            <person name="Komatsu T."/>
            <person name="Mizushima-Sugano J."/>
            <person name="Satoh T."/>
            <person name="Shirai Y."/>
            <person name="Takahashi Y."/>
            <person name="Nakagawa K."/>
            <person name="Okumura K."/>
            <person name="Nagase T."/>
            <person name="Nomura N."/>
            <person name="Kikuchi H."/>
            <person name="Masuho Y."/>
            <person name="Yamashita R."/>
            <person name="Nakai K."/>
            <person name="Yada T."/>
            <person name="Nakamura Y."/>
            <person name="Ohara O."/>
            <person name="Isogai T."/>
            <person name="Sugano S."/>
        </authorList>
    </citation>
    <scope>NUCLEOTIDE SEQUENCE [LARGE SCALE MRNA]</scope>
    <source>
        <tissue>Subthalamic nucleus</tissue>
    </source>
</reference>
<reference key="5">
    <citation type="journal article" date="2006" name="Nature">
        <title>The DNA sequence and biological annotation of human chromosome 1.</title>
        <authorList>
            <person name="Gregory S.G."/>
            <person name="Barlow K.F."/>
            <person name="McLay K.E."/>
            <person name="Kaul R."/>
            <person name="Swarbreck D."/>
            <person name="Dunham A."/>
            <person name="Scott C.E."/>
            <person name="Howe K.L."/>
            <person name="Woodfine K."/>
            <person name="Spencer C.C.A."/>
            <person name="Jones M.C."/>
            <person name="Gillson C."/>
            <person name="Searle S."/>
            <person name="Zhou Y."/>
            <person name="Kokocinski F."/>
            <person name="McDonald L."/>
            <person name="Evans R."/>
            <person name="Phillips K."/>
            <person name="Atkinson A."/>
            <person name="Cooper R."/>
            <person name="Jones C."/>
            <person name="Hall R.E."/>
            <person name="Andrews T.D."/>
            <person name="Lloyd C."/>
            <person name="Ainscough R."/>
            <person name="Almeida J.P."/>
            <person name="Ambrose K.D."/>
            <person name="Anderson F."/>
            <person name="Andrew R.W."/>
            <person name="Ashwell R.I.S."/>
            <person name="Aubin K."/>
            <person name="Babbage A.K."/>
            <person name="Bagguley C.L."/>
            <person name="Bailey J."/>
            <person name="Beasley H."/>
            <person name="Bethel G."/>
            <person name="Bird C.P."/>
            <person name="Bray-Allen S."/>
            <person name="Brown J.Y."/>
            <person name="Brown A.J."/>
            <person name="Buckley D."/>
            <person name="Burton J."/>
            <person name="Bye J."/>
            <person name="Carder C."/>
            <person name="Chapman J.C."/>
            <person name="Clark S.Y."/>
            <person name="Clarke G."/>
            <person name="Clee C."/>
            <person name="Cobley V."/>
            <person name="Collier R.E."/>
            <person name="Corby N."/>
            <person name="Coville G.J."/>
            <person name="Davies J."/>
            <person name="Deadman R."/>
            <person name="Dunn M."/>
            <person name="Earthrowl M."/>
            <person name="Ellington A.G."/>
            <person name="Errington H."/>
            <person name="Frankish A."/>
            <person name="Frankland J."/>
            <person name="French L."/>
            <person name="Garner P."/>
            <person name="Garnett J."/>
            <person name="Gay L."/>
            <person name="Ghori M.R.J."/>
            <person name="Gibson R."/>
            <person name="Gilby L.M."/>
            <person name="Gillett W."/>
            <person name="Glithero R.J."/>
            <person name="Grafham D.V."/>
            <person name="Griffiths C."/>
            <person name="Griffiths-Jones S."/>
            <person name="Grocock R."/>
            <person name="Hammond S."/>
            <person name="Harrison E.S.I."/>
            <person name="Hart E."/>
            <person name="Haugen E."/>
            <person name="Heath P.D."/>
            <person name="Holmes S."/>
            <person name="Holt K."/>
            <person name="Howden P.J."/>
            <person name="Hunt A.R."/>
            <person name="Hunt S.E."/>
            <person name="Hunter G."/>
            <person name="Isherwood J."/>
            <person name="James R."/>
            <person name="Johnson C."/>
            <person name="Johnson D."/>
            <person name="Joy A."/>
            <person name="Kay M."/>
            <person name="Kershaw J.K."/>
            <person name="Kibukawa M."/>
            <person name="Kimberley A.M."/>
            <person name="King A."/>
            <person name="Knights A.J."/>
            <person name="Lad H."/>
            <person name="Laird G."/>
            <person name="Lawlor S."/>
            <person name="Leongamornlert D.A."/>
            <person name="Lloyd D.M."/>
            <person name="Loveland J."/>
            <person name="Lovell J."/>
            <person name="Lush M.J."/>
            <person name="Lyne R."/>
            <person name="Martin S."/>
            <person name="Mashreghi-Mohammadi M."/>
            <person name="Matthews L."/>
            <person name="Matthews N.S.W."/>
            <person name="McLaren S."/>
            <person name="Milne S."/>
            <person name="Mistry S."/>
            <person name="Moore M.J.F."/>
            <person name="Nickerson T."/>
            <person name="O'Dell C.N."/>
            <person name="Oliver K."/>
            <person name="Palmeiri A."/>
            <person name="Palmer S.A."/>
            <person name="Parker A."/>
            <person name="Patel D."/>
            <person name="Pearce A.V."/>
            <person name="Peck A.I."/>
            <person name="Pelan S."/>
            <person name="Phelps K."/>
            <person name="Phillimore B.J."/>
            <person name="Plumb R."/>
            <person name="Rajan J."/>
            <person name="Raymond C."/>
            <person name="Rouse G."/>
            <person name="Saenphimmachak C."/>
            <person name="Sehra H.K."/>
            <person name="Sheridan E."/>
            <person name="Shownkeen R."/>
            <person name="Sims S."/>
            <person name="Skuce C.D."/>
            <person name="Smith M."/>
            <person name="Steward C."/>
            <person name="Subramanian S."/>
            <person name="Sycamore N."/>
            <person name="Tracey A."/>
            <person name="Tromans A."/>
            <person name="Van Helmond Z."/>
            <person name="Wall M."/>
            <person name="Wallis J.M."/>
            <person name="White S."/>
            <person name="Whitehead S.L."/>
            <person name="Wilkinson J.E."/>
            <person name="Willey D.L."/>
            <person name="Williams H."/>
            <person name="Wilming L."/>
            <person name="Wray P.W."/>
            <person name="Wu Z."/>
            <person name="Coulson A."/>
            <person name="Vaudin M."/>
            <person name="Sulston J.E."/>
            <person name="Durbin R.M."/>
            <person name="Hubbard T."/>
            <person name="Wooster R."/>
            <person name="Dunham I."/>
            <person name="Carter N.P."/>
            <person name="McVean G."/>
            <person name="Ross M.T."/>
            <person name="Harrow J."/>
            <person name="Olson M.V."/>
            <person name="Beck S."/>
            <person name="Rogers J."/>
            <person name="Bentley D.R."/>
        </authorList>
    </citation>
    <scope>NUCLEOTIDE SEQUENCE [LARGE SCALE GENOMIC DNA]</scope>
</reference>
<reference key="6">
    <citation type="submission" date="2005-07" db="EMBL/GenBank/DDBJ databases">
        <authorList>
            <person name="Mural R.J."/>
            <person name="Istrail S."/>
            <person name="Sutton G.G."/>
            <person name="Florea L."/>
            <person name="Halpern A.L."/>
            <person name="Mobarry C.M."/>
            <person name="Lippert R."/>
            <person name="Walenz B."/>
            <person name="Shatkay H."/>
            <person name="Dew I."/>
            <person name="Miller J.R."/>
            <person name="Flanigan M.J."/>
            <person name="Edwards N.J."/>
            <person name="Bolanos R."/>
            <person name="Fasulo D."/>
            <person name="Halldorsson B.V."/>
            <person name="Hannenhalli S."/>
            <person name="Turner R."/>
            <person name="Yooseph S."/>
            <person name="Lu F."/>
            <person name="Nusskern D.R."/>
            <person name="Shue B.C."/>
            <person name="Zheng X.H."/>
            <person name="Zhong F."/>
            <person name="Delcher A.L."/>
            <person name="Huson D.H."/>
            <person name="Kravitz S.A."/>
            <person name="Mouchard L."/>
            <person name="Reinert K."/>
            <person name="Remington K.A."/>
            <person name="Clark A.G."/>
            <person name="Waterman M.S."/>
            <person name="Eichler E.E."/>
            <person name="Adams M.D."/>
            <person name="Hunkapiller M.W."/>
            <person name="Myers E.W."/>
            <person name="Venter J.C."/>
        </authorList>
    </citation>
    <scope>NUCLEOTIDE SEQUENCE [LARGE SCALE GENOMIC DNA]</scope>
</reference>
<reference key="7">
    <citation type="journal article" date="2004" name="Genome Res.">
        <title>The status, quality, and expansion of the NIH full-length cDNA project: the Mammalian Gene Collection (MGC).</title>
        <authorList>
            <consortium name="The MGC Project Team"/>
        </authorList>
    </citation>
    <scope>NUCLEOTIDE SEQUENCE [LARGE SCALE MRNA]</scope>
    <source>
        <tissue>Colon</tissue>
    </source>
</reference>
<reference key="8">
    <citation type="journal article" date="2007" name="Science">
        <title>ATM and ATR substrate analysis reveals extensive protein networks responsive to DNA damage.</title>
        <authorList>
            <person name="Matsuoka S."/>
            <person name="Ballif B.A."/>
            <person name="Smogorzewska A."/>
            <person name="McDonald E.R. III"/>
            <person name="Hurov K.E."/>
            <person name="Luo J."/>
            <person name="Bakalarski C.E."/>
            <person name="Zhao Z."/>
            <person name="Solimini N."/>
            <person name="Lerenthal Y."/>
            <person name="Shiloh Y."/>
            <person name="Gygi S.P."/>
            <person name="Elledge S.J."/>
        </authorList>
    </citation>
    <scope>PHOSPHORYLATION [LARGE SCALE ANALYSIS] AT SER-72</scope>
    <scope>IDENTIFICATION BY MASS SPECTROMETRY [LARGE SCALE ANALYSIS]</scope>
    <source>
        <tissue>Embryonic kidney</tissue>
    </source>
</reference>
<reference key="9">
    <citation type="journal article" date="2008" name="Proc. Natl. Acad. Sci. U.S.A.">
        <title>A quantitative atlas of mitotic phosphorylation.</title>
        <authorList>
            <person name="Dephoure N."/>
            <person name="Zhou C."/>
            <person name="Villen J."/>
            <person name="Beausoleil S.A."/>
            <person name="Bakalarski C.E."/>
            <person name="Elledge S.J."/>
            <person name="Gygi S.P."/>
        </authorList>
    </citation>
    <scope>PHOSPHORYLATION [LARGE SCALE ANALYSIS] AT SER-77</scope>
    <scope>IDENTIFICATION BY MASS SPECTROMETRY [LARGE SCALE ANALYSIS]</scope>
    <source>
        <tissue>Cervix carcinoma</tissue>
    </source>
</reference>
<reference key="10">
    <citation type="journal article" date="2013" name="J. Proteome Res.">
        <title>Toward a comprehensive characterization of a human cancer cell phosphoproteome.</title>
        <authorList>
            <person name="Zhou H."/>
            <person name="Di Palma S."/>
            <person name="Preisinger C."/>
            <person name="Peng M."/>
            <person name="Polat A.N."/>
            <person name="Heck A.J."/>
            <person name="Mohammed S."/>
        </authorList>
    </citation>
    <scope>PHOSPHORYLATION [LARGE SCALE ANALYSIS] AT SER-72 AND SER-77</scope>
    <scope>IDENTIFICATION BY MASS SPECTROMETRY [LARGE SCALE ANALYSIS]</scope>
    <source>
        <tissue>Erythroleukemia</tissue>
    </source>
</reference>
<reference key="11">
    <citation type="journal article" date="2013" name="PLoS Genet.">
        <title>A newly uncovered group of distantly related lysine methyltransferases preferentially interact with molecular chaperones to regulate their activity.</title>
        <authorList>
            <person name="Cloutier P."/>
            <person name="Lavallee-Adam M."/>
            <person name="Faubert D."/>
            <person name="Blanchette M."/>
            <person name="Coulombe B."/>
        </authorList>
    </citation>
    <scope>FUNCTION</scope>
    <scope>INTERACTION WITH GRWD1; HSP70 AND HSP90 FAMILY MEMBERS</scope>
</reference>
<reference key="12">
    <citation type="journal article" date="2021" name="Nucleic Acids Res.">
        <title>Human METTL18 is a histidine-specific methyltransferase that targets RPL3 and affects ribosome biogenesis and function.</title>
        <authorList>
            <person name="Malecki J.M."/>
            <person name="Odonohue M.F."/>
            <person name="Kim Y."/>
            <person name="Jakobsson M.E."/>
            <person name="Gessa L."/>
            <person name="Pinto R."/>
            <person name="Wu J."/>
            <person name="Davydova E."/>
            <person name="Moen A."/>
            <person name="Olsen J.V."/>
            <person name="Thiede B."/>
            <person name="Gleizes P.E."/>
            <person name="Leidel S.A."/>
            <person name="Falnes P.O."/>
        </authorList>
    </citation>
    <scope>FUNCTION</scope>
    <scope>CATALYTIC ACTIVITY</scope>
    <scope>INTERACTION WITH RPL3</scope>
    <scope>SUBCELLULAR LOCATION</scope>
    <scope>METHYLATION AT HIS-154</scope>
    <scope>MOTIF</scope>
    <scope>MUTAGENESIS OF HIS-154; ASP-217 AND 250-LYS-ARG-251</scope>
</reference>
<reference key="13">
    <citation type="journal article" date="2022" name="Elife">
        <title>METTL18-mediated histidine methylation of RPL3 modulates translation elongation for proteostasis maintenance.</title>
        <authorList>
            <person name="Matsuura-Suzuki E."/>
            <person name="Shimazu T."/>
            <person name="Takahashi M."/>
            <person name="Kotoshiba K."/>
            <person name="Suzuki T."/>
            <person name="Kashiwagi K."/>
            <person name="Sohtome Y."/>
            <person name="Akakabe M."/>
            <person name="Sodeoka M."/>
            <person name="Dohmae N."/>
            <person name="Ito T."/>
            <person name="Shinkai Y."/>
            <person name="Iwasaki S."/>
        </authorList>
    </citation>
    <scope>FUNCTION</scope>
    <scope>CATALYTIC ACTIVITY</scope>
    <scope>MUTAGENESIS OF 193-ASP--GLY-197</scope>
</reference>
<reference evidence="12" key="14">
    <citation type="submission" date="2014-09" db="PDB data bank">
        <title>Human Methyltransferase-Like 18.</title>
        <authorList>
            <person name="Ravichandran M."/>
            <person name="Tempel W."/>
            <person name="Li Y."/>
            <person name="Walker J.R."/>
            <person name="Bountra C."/>
            <person name="Arrowsmith C.H."/>
            <person name="Edwards A.M."/>
            <person name="Brown P.J."/>
            <person name="Hong B.S."/>
        </authorList>
    </citation>
    <scope>X-RAY CRYSTALLOGRAPHY (2.40 ANGSTROMS) OF 63-372 IN COMPLEX WITH S-ADENOSYL-L-METHIONINE</scope>
    <scope>REGION</scope>
</reference>
<keyword id="KW-0002">3D-structure</keyword>
<keyword id="KW-0963">Cytoplasm</keyword>
<keyword id="KW-0488">Methylation</keyword>
<keyword id="KW-0489">Methyltransferase</keyword>
<keyword id="KW-0539">Nucleus</keyword>
<keyword id="KW-0597">Phosphoprotein</keyword>
<keyword id="KW-1267">Proteomics identification</keyword>
<keyword id="KW-1185">Reference proteome</keyword>
<keyword id="KW-0949">S-adenosyl-L-methionine</keyword>
<keyword id="KW-0808">Transferase</keyword>
<organism>
    <name type="scientific">Homo sapiens</name>
    <name type="common">Human</name>
    <dbReference type="NCBI Taxonomy" id="9606"/>
    <lineage>
        <taxon>Eukaryota</taxon>
        <taxon>Metazoa</taxon>
        <taxon>Chordata</taxon>
        <taxon>Craniata</taxon>
        <taxon>Vertebrata</taxon>
        <taxon>Euteleostomi</taxon>
        <taxon>Mammalia</taxon>
        <taxon>Eutheria</taxon>
        <taxon>Euarchontoglires</taxon>
        <taxon>Primates</taxon>
        <taxon>Haplorrhini</taxon>
        <taxon>Catarrhini</taxon>
        <taxon>Hominidae</taxon>
        <taxon>Homo</taxon>
    </lineage>
</organism>
<name>MET18_HUMAN</name>
<protein>
    <recommendedName>
        <fullName evidence="9">Histidine protein methyltransferase 1 homolog</fullName>
        <ecNumber evidence="3 4">2.1.1.85</ecNumber>
    </recommendedName>
    <alternativeName>
        <fullName evidence="7">Arsenic-transactivated protein 2</fullName>
        <shortName evidence="7">AsTP2</shortName>
    </alternativeName>
    <alternativeName>
        <fullName evidence="11">Methyltransferase-like protein 18</fullName>
    </alternativeName>
</protein>
<gene>
    <name evidence="6 11" type="primary">METTL18</name>
    <name evidence="7" type="synonym">ASTP2</name>
    <name evidence="11" type="synonym">C1orf156</name>
</gene>
<evidence type="ECO:0000256" key="1">
    <source>
        <dbReference type="SAM" id="MobiDB-lite"/>
    </source>
</evidence>
<evidence type="ECO:0000269" key="2">
    <source>
    </source>
</evidence>
<evidence type="ECO:0000269" key="3">
    <source>
    </source>
</evidence>
<evidence type="ECO:0000269" key="4">
    <source>
    </source>
</evidence>
<evidence type="ECO:0000269" key="5">
    <source ref="14"/>
</evidence>
<evidence type="ECO:0000303" key="6">
    <source>
    </source>
</evidence>
<evidence type="ECO:0000303" key="7">
    <source ref="1"/>
</evidence>
<evidence type="ECO:0000305" key="8"/>
<evidence type="ECO:0000305" key="9">
    <source>
    </source>
</evidence>
<evidence type="ECO:0000305" key="10">
    <source>
    </source>
</evidence>
<evidence type="ECO:0000312" key="11">
    <source>
        <dbReference type="HGNC" id="HGNC:28793"/>
    </source>
</evidence>
<evidence type="ECO:0007744" key="12">
    <source>
        <dbReference type="PDB" id="4RFQ"/>
    </source>
</evidence>
<evidence type="ECO:0007744" key="13">
    <source>
    </source>
</evidence>
<evidence type="ECO:0007744" key="14">
    <source>
    </source>
</evidence>
<evidence type="ECO:0007744" key="15">
    <source>
    </source>
</evidence>
<evidence type="ECO:0007829" key="16">
    <source>
        <dbReference type="PDB" id="4RFQ"/>
    </source>
</evidence>
<accession>O95568</accession>
<accession>B2R9T5</accession>
<sequence>MTFQFNFTIEDHLENELTPIRDGALTLDSSKELSVSESQKGEERDRKCSAEQFDLPQDHLWEHKSMENAAPSQDTDSPLSAASSSRNLEPHGKQPSLRAAKEHAMPKDLKKMLENKVIETLPGFQHVKLSVVKTILLKENFPGENIVSKSFSSHSDLITGVYEGGLKIWECTFDLLAYFTKAKVKFAGKKVLDLGCGSGLLGITAFKGGSKEIHFQDYNSMVIDEVTLPNVVANSTLEDEENDVNEPDVKRCRKPKVTQLYKCRFFSGEWSEFCKLVLSSEKLFVKYDLILTSETIYNPDYYSNLHQTFLRLLSKNGRVLLASKAHYFGVGGGVHLFQKFVEERDVFKTRILKIIDEGLKRFIIEITFKFPG</sequence>
<feature type="chain" id="PRO_0000247199" description="Histidine protein methyltransferase 1 homolog">
    <location>
        <begin position="1"/>
        <end position="372"/>
    </location>
</feature>
<feature type="region of interest" description="Disordered" evidence="1">
    <location>
        <begin position="30"/>
        <end position="55"/>
    </location>
</feature>
<feature type="region of interest" description="Disordered" evidence="1">
    <location>
        <begin position="68"/>
        <end position="103"/>
    </location>
</feature>
<feature type="short sequence motif" description="Nuclear localization signal" evidence="3">
    <location>
        <begin position="247"/>
        <end position="253"/>
    </location>
</feature>
<feature type="compositionally biased region" description="Basic and acidic residues" evidence="1">
    <location>
        <begin position="39"/>
        <end position="49"/>
    </location>
</feature>
<feature type="compositionally biased region" description="Polar residues" evidence="1">
    <location>
        <begin position="70"/>
        <end position="87"/>
    </location>
</feature>
<feature type="binding site" evidence="5 12">
    <location>
        <begin position="168"/>
        <end position="172"/>
    </location>
    <ligand>
        <name>S-adenosyl-L-methionine</name>
        <dbReference type="ChEBI" id="CHEBI:59789"/>
    </ligand>
</feature>
<feature type="binding site" evidence="5 10 12">
    <location>
        <position position="195"/>
    </location>
    <ligand>
        <name>S-adenosyl-L-methionine</name>
        <dbReference type="ChEBI" id="CHEBI:59789"/>
    </ligand>
</feature>
<feature type="binding site" evidence="5 12">
    <location>
        <begin position="216"/>
        <end position="218"/>
    </location>
    <ligand>
        <name>S-adenosyl-L-methionine</name>
        <dbReference type="ChEBI" id="CHEBI:59789"/>
    </ligand>
</feature>
<feature type="binding site" evidence="5 12">
    <location>
        <begin position="268"/>
        <end position="270"/>
    </location>
    <ligand>
        <name>S-adenosyl-L-methionine</name>
        <dbReference type="ChEBI" id="CHEBI:59789"/>
    </ligand>
</feature>
<feature type="binding site" evidence="5 12">
    <location>
        <position position="293"/>
    </location>
    <ligand>
        <name>S-adenosyl-L-methionine</name>
        <dbReference type="ChEBI" id="CHEBI:59789"/>
    </ligand>
</feature>
<feature type="modified residue" description="Phosphoserine" evidence="13 15">
    <location>
        <position position="72"/>
    </location>
</feature>
<feature type="modified residue" description="Phosphoserine" evidence="14 15">
    <location>
        <position position="77"/>
    </location>
</feature>
<feature type="modified residue" description="Tele-methylhistidine; by autocatalysis" evidence="3">
    <location>
        <position position="154"/>
    </location>
</feature>
<feature type="sequence variant" id="VAR_027087" description="In dbSNP:rs10489177.">
    <original>E</original>
    <variation>D</variation>
    <location>
        <position position="10"/>
    </location>
</feature>
<feature type="sequence variant" id="VAR_054050" description="In dbSNP:rs34396097.">
    <original>F</original>
    <variation>L</variation>
    <location>
        <position position="309"/>
    </location>
</feature>
<feature type="sequence variant" id="VAR_054051" description="In dbSNP:rs35984232.">
    <original>R</original>
    <variation>H</variation>
    <location>
        <position position="318"/>
    </location>
</feature>
<feature type="sequence variant" id="VAR_027088" description="In dbSNP:rs16862686.">
    <original>A</original>
    <variation>V</variation>
    <location>
        <position position="325"/>
    </location>
</feature>
<feature type="sequence variant" id="VAR_027089" description="In dbSNP:rs13375701.">
    <original>K</original>
    <variation>M</variation>
    <location>
        <position position="360"/>
    </location>
</feature>
<feature type="mutagenesis site" description="No effect on automethylation. Loss of protein-L-histidine N-tele-methyltransferase activity toward RPL3." evidence="3">
    <original>H</original>
    <variation>A</variation>
    <location>
        <position position="154"/>
    </location>
</feature>
<feature type="mutagenesis site" description="Abolished protein-L-histidine N-tele-methyltransferase activity." evidence="4">
    <original>DLGCG</original>
    <variation>KLRCR</variation>
    <location>
        <begin position="193"/>
        <end position="197"/>
    </location>
</feature>
<feature type="mutagenesis site" description="Loss of protein-L-histidine N-tele-methyltransferase activity." evidence="3">
    <original>D</original>
    <variation>A</variation>
    <location>
        <position position="217"/>
    </location>
</feature>
<feature type="mutagenesis site" description="Decreased localization to the nucleus." evidence="3">
    <original>KR</original>
    <variation>GG</variation>
    <location>
        <begin position="250"/>
        <end position="251"/>
    </location>
</feature>
<feature type="helix" evidence="16">
    <location>
        <begin position="86"/>
        <end position="88"/>
    </location>
</feature>
<feature type="strand" evidence="16">
    <location>
        <begin position="92"/>
        <end position="94"/>
    </location>
</feature>
<feature type="strand" evidence="16">
    <location>
        <begin position="101"/>
        <end position="103"/>
    </location>
</feature>
<feature type="helix" evidence="16">
    <location>
        <begin position="109"/>
        <end position="113"/>
    </location>
</feature>
<feature type="strand" evidence="16">
    <location>
        <begin position="116"/>
        <end position="120"/>
    </location>
</feature>
<feature type="strand" evidence="16">
    <location>
        <begin position="124"/>
        <end position="126"/>
    </location>
</feature>
<feature type="strand" evidence="16">
    <location>
        <begin position="130"/>
        <end position="138"/>
    </location>
</feature>
<feature type="strand" evidence="16">
    <location>
        <begin position="162"/>
        <end position="164"/>
    </location>
</feature>
<feature type="helix" evidence="16">
    <location>
        <begin position="170"/>
        <end position="181"/>
    </location>
</feature>
<feature type="strand" evidence="16">
    <location>
        <begin position="190"/>
        <end position="194"/>
    </location>
</feature>
<feature type="helix" evidence="16">
    <location>
        <begin position="200"/>
        <end position="207"/>
    </location>
</feature>
<feature type="strand" evidence="16">
    <location>
        <begin position="211"/>
        <end position="218"/>
    </location>
</feature>
<feature type="helix" evidence="16">
    <location>
        <begin position="220"/>
        <end position="225"/>
    </location>
</feature>
<feature type="helix" evidence="16">
    <location>
        <begin position="227"/>
        <end position="233"/>
    </location>
</feature>
<feature type="helix" evidence="16">
    <location>
        <begin position="257"/>
        <end position="262"/>
    </location>
</feature>
<feature type="strand" evidence="16">
    <location>
        <begin position="263"/>
        <end position="268"/>
    </location>
</feature>
<feature type="helix" evidence="16">
    <location>
        <begin position="270"/>
        <end position="278"/>
    </location>
</feature>
<feature type="strand" evidence="16">
    <location>
        <begin position="280"/>
        <end position="283"/>
    </location>
</feature>
<feature type="strand" evidence="16">
    <location>
        <begin position="287"/>
        <end position="294"/>
    </location>
</feature>
<feature type="helix" evidence="16">
    <location>
        <begin position="299"/>
        <end position="301"/>
    </location>
</feature>
<feature type="helix" evidence="16">
    <location>
        <begin position="302"/>
        <end position="312"/>
    </location>
</feature>
<feature type="strand" evidence="16">
    <location>
        <begin position="313"/>
        <end position="326"/>
    </location>
</feature>
<feature type="turn" evidence="16">
    <location>
        <begin position="328"/>
        <end position="330"/>
    </location>
</feature>
<feature type="helix" evidence="16">
    <location>
        <begin position="334"/>
        <end position="344"/>
    </location>
</feature>
<feature type="strand" evidence="16">
    <location>
        <begin position="346"/>
        <end position="355"/>
    </location>
</feature>
<feature type="strand" evidence="16">
    <location>
        <begin position="357"/>
        <end position="359"/>
    </location>
</feature>
<feature type="strand" evidence="16">
    <location>
        <begin position="361"/>
        <end position="368"/>
    </location>
</feature>
<dbReference type="EC" id="2.1.1.85" evidence="3 4"/>
<dbReference type="EMBL" id="AY744366">
    <property type="protein sequence ID" value="AAU95377.1"/>
    <property type="molecule type" value="mRNA"/>
</dbReference>
<dbReference type="EMBL" id="AL035369">
    <property type="protein sequence ID" value="CAA23019.1"/>
    <property type="molecule type" value="mRNA"/>
</dbReference>
<dbReference type="EMBL" id="CR450330">
    <property type="protein sequence ID" value="CAG29326.1"/>
    <property type="molecule type" value="mRNA"/>
</dbReference>
<dbReference type="EMBL" id="AK313909">
    <property type="protein sequence ID" value="BAG36632.1"/>
    <property type="molecule type" value="mRNA"/>
</dbReference>
<dbReference type="EMBL" id="AL021940">
    <property type="status" value="NOT_ANNOTATED_CDS"/>
    <property type="molecule type" value="Genomic_DNA"/>
</dbReference>
<dbReference type="EMBL" id="CH471067">
    <property type="protein sequence ID" value="EAW90861.1"/>
    <property type="molecule type" value="Genomic_DNA"/>
</dbReference>
<dbReference type="EMBL" id="BC008679">
    <property type="protein sequence ID" value="AAH08679.1"/>
    <property type="molecule type" value="mRNA"/>
</dbReference>
<dbReference type="CCDS" id="CCDS1284.1"/>
<dbReference type="RefSeq" id="NP_001307128.1">
    <property type="nucleotide sequence ID" value="NM_001320199.2"/>
</dbReference>
<dbReference type="RefSeq" id="NP_001307130.1">
    <property type="nucleotide sequence ID" value="NM_001320201.2"/>
</dbReference>
<dbReference type="RefSeq" id="NP_219486.1">
    <property type="nucleotide sequence ID" value="NM_033418.4"/>
</dbReference>
<dbReference type="RefSeq" id="XP_006711690.1">
    <property type="nucleotide sequence ID" value="XM_006711627.4"/>
</dbReference>
<dbReference type="PDB" id="4RFQ">
    <property type="method" value="X-ray"/>
    <property type="resolution" value="2.40 A"/>
    <property type="chains" value="A=63-372"/>
</dbReference>
<dbReference type="PDBsum" id="4RFQ"/>
<dbReference type="SMR" id="O95568"/>
<dbReference type="BioGRID" id="124936">
    <property type="interactions" value="78"/>
</dbReference>
<dbReference type="FunCoup" id="O95568">
    <property type="interactions" value="2937"/>
</dbReference>
<dbReference type="IntAct" id="O95568">
    <property type="interactions" value="19"/>
</dbReference>
<dbReference type="MINT" id="O95568"/>
<dbReference type="STRING" id="9606.ENSP00000307975"/>
<dbReference type="CarbonylDB" id="O95568"/>
<dbReference type="iPTMnet" id="O95568"/>
<dbReference type="PhosphoSitePlus" id="O95568"/>
<dbReference type="BioMuta" id="METTL18"/>
<dbReference type="jPOST" id="O95568"/>
<dbReference type="MassIVE" id="O95568"/>
<dbReference type="PaxDb" id="9606-ENSP00000307975"/>
<dbReference type="PeptideAtlas" id="O95568"/>
<dbReference type="ProteomicsDB" id="50944"/>
<dbReference type="Pumba" id="O95568"/>
<dbReference type="Antibodypedia" id="34368">
    <property type="antibodies" value="43 antibodies from 11 providers"/>
</dbReference>
<dbReference type="DNASU" id="92342"/>
<dbReference type="Ensembl" id="ENST00000303469.6">
    <property type="protein sequence ID" value="ENSP00000307077.2"/>
    <property type="gene ID" value="ENSG00000171806.12"/>
</dbReference>
<dbReference type="Ensembl" id="ENST00000310392.5">
    <property type="protein sequence ID" value="ENSP00000307975.4"/>
    <property type="gene ID" value="ENSG00000171806.12"/>
</dbReference>
<dbReference type="GeneID" id="92342"/>
<dbReference type="KEGG" id="hsa:92342"/>
<dbReference type="MANE-Select" id="ENST00000310392.5">
    <property type="protein sequence ID" value="ENSP00000307975.4"/>
    <property type="RefSeq nucleotide sequence ID" value="NM_033418.4"/>
    <property type="RefSeq protein sequence ID" value="NP_219486.1"/>
</dbReference>
<dbReference type="UCSC" id="uc001ggn.6">
    <property type="organism name" value="human"/>
</dbReference>
<dbReference type="AGR" id="HGNC:28793"/>
<dbReference type="CTD" id="92342"/>
<dbReference type="DisGeNET" id="92342"/>
<dbReference type="GeneCards" id="METTL18"/>
<dbReference type="HGNC" id="HGNC:28793">
    <property type="gene designation" value="METTL18"/>
</dbReference>
<dbReference type="HPA" id="ENSG00000171806">
    <property type="expression patterns" value="Low tissue specificity"/>
</dbReference>
<dbReference type="MIM" id="615255">
    <property type="type" value="gene"/>
</dbReference>
<dbReference type="neXtProt" id="NX_O95568"/>
<dbReference type="OpenTargets" id="ENSG00000171806"/>
<dbReference type="PharmGKB" id="PA142672407"/>
<dbReference type="VEuPathDB" id="HostDB:ENSG00000171806"/>
<dbReference type="eggNOG" id="KOG2920">
    <property type="taxonomic scope" value="Eukaryota"/>
</dbReference>
<dbReference type="GeneTree" id="ENSGT00390000000464"/>
<dbReference type="HOGENOM" id="CLU_038704_0_1_1"/>
<dbReference type="InParanoid" id="O95568"/>
<dbReference type="OMA" id="LCKCRFF"/>
<dbReference type="OrthoDB" id="1723750at2759"/>
<dbReference type="PAN-GO" id="O95568">
    <property type="GO annotations" value="2 GO annotations based on evolutionary models"/>
</dbReference>
<dbReference type="PhylomeDB" id="O95568"/>
<dbReference type="TreeFam" id="TF320884"/>
<dbReference type="PathwayCommons" id="O95568"/>
<dbReference type="SignaLink" id="O95568"/>
<dbReference type="BioGRID-ORCS" id="92342">
    <property type="hits" value="27 hits in 1157 CRISPR screens"/>
</dbReference>
<dbReference type="ChiTaRS" id="METTL18">
    <property type="organism name" value="human"/>
</dbReference>
<dbReference type="EvolutionaryTrace" id="O95568"/>
<dbReference type="GenomeRNAi" id="92342"/>
<dbReference type="Pharos" id="O95568">
    <property type="development level" value="Tdark"/>
</dbReference>
<dbReference type="PRO" id="PR:O95568"/>
<dbReference type="Proteomes" id="UP000005640">
    <property type="component" value="Chromosome 1"/>
</dbReference>
<dbReference type="RNAct" id="O95568">
    <property type="molecule type" value="protein"/>
</dbReference>
<dbReference type="Bgee" id="ENSG00000171806">
    <property type="expression patterns" value="Expressed in primordial germ cell in gonad and 192 other cell types or tissues"/>
</dbReference>
<dbReference type="ExpressionAtlas" id="O95568">
    <property type="expression patterns" value="baseline and differential"/>
</dbReference>
<dbReference type="GO" id="GO:0005829">
    <property type="term" value="C:cytosol"/>
    <property type="evidence" value="ECO:0000314"/>
    <property type="project" value="UniProtKB"/>
</dbReference>
<dbReference type="GO" id="GO:0005730">
    <property type="term" value="C:nucleolus"/>
    <property type="evidence" value="ECO:0000314"/>
    <property type="project" value="UniProtKB"/>
</dbReference>
<dbReference type="GO" id="GO:0005634">
    <property type="term" value="C:nucleus"/>
    <property type="evidence" value="ECO:0000314"/>
    <property type="project" value="UniProtKB"/>
</dbReference>
<dbReference type="GO" id="GO:0032991">
    <property type="term" value="C:protein-containing complex"/>
    <property type="evidence" value="ECO:0000314"/>
    <property type="project" value="UniProtKB"/>
</dbReference>
<dbReference type="GO" id="GO:0031072">
    <property type="term" value="F:heat shock protein binding"/>
    <property type="evidence" value="ECO:0000353"/>
    <property type="project" value="UniProtKB"/>
</dbReference>
<dbReference type="GO" id="GO:0018064">
    <property type="term" value="F:protein-L-histidine N-tele-methyltransferase activity"/>
    <property type="evidence" value="ECO:0000314"/>
    <property type="project" value="UniProtKB"/>
</dbReference>
<dbReference type="GO" id="GO:0018026">
    <property type="term" value="P:peptidyl-lysine monomethylation"/>
    <property type="evidence" value="ECO:0000314"/>
    <property type="project" value="UniProtKB"/>
</dbReference>
<dbReference type="GO" id="GO:0090069">
    <property type="term" value="P:regulation of ribosome biogenesis"/>
    <property type="evidence" value="ECO:0000315"/>
    <property type="project" value="UniProtKB"/>
</dbReference>
<dbReference type="GO" id="GO:2000232">
    <property type="term" value="P:regulation of rRNA processing"/>
    <property type="evidence" value="ECO:0000315"/>
    <property type="project" value="UniProtKB"/>
</dbReference>
<dbReference type="GO" id="GO:0006417">
    <property type="term" value="P:regulation of translation"/>
    <property type="evidence" value="ECO:0000315"/>
    <property type="project" value="UniProtKB"/>
</dbReference>
<dbReference type="GO" id="GO:0006448">
    <property type="term" value="P:regulation of translational elongation"/>
    <property type="evidence" value="ECO:0000314"/>
    <property type="project" value="UniProtKB"/>
</dbReference>
<dbReference type="CDD" id="cd02440">
    <property type="entry name" value="AdoMet_MTases"/>
    <property type="match status" value="1"/>
</dbReference>
<dbReference type="FunFam" id="3.40.50.150:FF:000268">
    <property type="entry name" value="Histidine protein methyltransferase 1 homolog"/>
    <property type="match status" value="1"/>
</dbReference>
<dbReference type="Gene3D" id="3.40.50.150">
    <property type="entry name" value="Vaccinia Virus protein VP39"/>
    <property type="match status" value="1"/>
</dbReference>
<dbReference type="InterPro" id="IPR019410">
    <property type="entry name" value="Methyltransf_16"/>
</dbReference>
<dbReference type="InterPro" id="IPR029063">
    <property type="entry name" value="SAM-dependent_MTases_sf"/>
</dbReference>
<dbReference type="PANTHER" id="PTHR14614">
    <property type="entry name" value="HEPATOCELLULAR CARCINOMA-ASSOCIATED ANTIGEN"/>
    <property type="match status" value="1"/>
</dbReference>
<dbReference type="PANTHER" id="PTHR14614:SF39">
    <property type="entry name" value="HISTIDINE PROTEIN METHYLTRANSFERASE 1 HOMOLOG"/>
    <property type="match status" value="1"/>
</dbReference>
<dbReference type="Pfam" id="PF13489">
    <property type="entry name" value="Methyltransf_23"/>
    <property type="match status" value="1"/>
</dbReference>
<dbReference type="SUPFAM" id="SSF53335">
    <property type="entry name" value="S-adenosyl-L-methionine-dependent methyltransferases"/>
    <property type="match status" value="1"/>
</dbReference>
<proteinExistence type="evidence at protein level"/>